<evidence type="ECO:0000255" key="1">
    <source>
        <dbReference type="PROSITE-ProRule" id="PRU00054"/>
    </source>
</evidence>
<evidence type="ECO:0000255" key="2">
    <source>
        <dbReference type="PROSITE-ProRule" id="PRU10105"/>
    </source>
</evidence>
<evidence type="ECO:0000269" key="3">
    <source>
    </source>
</evidence>
<evidence type="ECO:0000269" key="4">
    <source>
    </source>
</evidence>
<evidence type="ECO:0000305" key="5"/>
<feature type="chain" id="PRO_0000352512" description="Bifunctional nitrilase/nitrile hydratase NIT4B">
    <location>
        <begin position="1"/>
        <end position="348"/>
    </location>
</feature>
<feature type="domain" description="CN hydrolase" evidence="1">
    <location>
        <begin position="29"/>
        <end position="300"/>
    </location>
</feature>
<feature type="active site" description="Proton acceptor" evidence="1">
    <location>
        <position position="69"/>
    </location>
</feature>
<feature type="active site" description="Proton donor" evidence="1">
    <location>
        <position position="156"/>
    </location>
</feature>
<feature type="active site" description="Nucleophile" evidence="1 2">
    <location>
        <position position="190"/>
    </location>
</feature>
<reference key="1">
    <citation type="submission" date="1996-01" db="EMBL/GenBank/DDBJ databases">
        <authorList>
            <person name="Tsunoda H."/>
        </authorList>
    </citation>
    <scope>NUCLEOTIDE SEQUENCE [MRNA]</scope>
    <source>
        <strain>cv. SR1</strain>
        <tissue>Leaf</tissue>
    </source>
</reference>
<reference key="2">
    <citation type="journal article" date="1999" name="DNA Res.">
        <title>Structural analysis of the TNIT4 genes encoding nitrilase-like protein from tobacco.</title>
        <authorList>
            <person name="Dohmoto M."/>
            <person name="Sano J."/>
            <person name="Tsunoda H."/>
            <person name="Yamaguchi K."/>
        </authorList>
    </citation>
    <scope>FUNCTION</scope>
    <scope>TISSUE SPECIFICITY</scope>
    <scope>INDUCTION</scope>
</reference>
<reference key="3">
    <citation type="journal article" date="2001" name="J. Biol. Chem.">
        <title>The Arabidopsis thaliana isogene NIT4 and its orthologs in tobacco encode beta-cyano-L-alanine hydratase/nitrilase.</title>
        <authorList>
            <person name="Piotrowski M."/>
            <person name="Schoenfelder S."/>
            <person name="Weiler E.W."/>
        </authorList>
    </citation>
    <scope>FUNCTION</scope>
</reference>
<comment type="function">
    <text evidence="3 4">Highly specific for beta-cyano-L-alanine (Ala(CN)). Low activity with 3-phenylpropionitrile (PPN). Not associated with auxin production but may be involved in cyanide detoxification.</text>
</comment>
<comment type="catalytic activity">
    <reaction evidence="2">
        <text>a nitrile + 2 H2O = a carboxylate + NH4(+)</text>
        <dbReference type="Rhea" id="RHEA:21724"/>
        <dbReference type="ChEBI" id="CHEBI:15377"/>
        <dbReference type="ChEBI" id="CHEBI:18379"/>
        <dbReference type="ChEBI" id="CHEBI:28938"/>
        <dbReference type="ChEBI" id="CHEBI:29067"/>
        <dbReference type="EC" id="3.5.5.1"/>
    </reaction>
</comment>
<comment type="catalytic activity">
    <reaction>
        <text>3-cyano-L-alanine + 2 H2O = L-aspartate + NH4(+)</text>
        <dbReference type="Rhea" id="RHEA:11188"/>
        <dbReference type="ChEBI" id="CHEBI:15377"/>
        <dbReference type="ChEBI" id="CHEBI:28938"/>
        <dbReference type="ChEBI" id="CHEBI:29991"/>
        <dbReference type="ChEBI" id="CHEBI:77860"/>
        <dbReference type="EC" id="3.5.5.4"/>
    </reaction>
</comment>
<comment type="tissue specificity">
    <text evidence="3">Expressed in roots, stems, cotyledons, leaves and flowers.</text>
</comment>
<comment type="induction">
    <text evidence="3">Not induced by abscisic acid or by 1-aminocyclopropane-1-carboxylic acid (ACC).</text>
</comment>
<comment type="similarity">
    <text evidence="5">Belongs to the carbon-nitrogen hydrolase superfamily. Nitrilase family.</text>
</comment>
<sequence length="348" mass="37534">MALVPTPVVNEGPMFAEVDMGDNSSTPTVRATVVQASTIFYDTPATLDKAERLLAEAASYGAQLVVFPEAFIGGYPRGSTFGVSIGNRTAKGKEEFRKYHASAIDVPGPEVDRLAAMAGKYKVYLVMGVIERDGYTLYCTVLFFDSQGHYLGKHRKIMPTALERIIWGFGDGSTIPVYDTPLGKIGAAICWENRMPLLRTAMYAKGIEIYCAPTADSRDVWQASMTHIALEGGCFVLSANQFCRRKDYPPPPEYVFSGTEDLTPDSIVCAGGSVIISPSGAVLAGPNYEGEALISADLDLGEIARAKFDFDVVGHYARPEVLSLIVRDHAVSPVSFTSTSSKAESSPK</sequence>
<accession>Q42966</accession>
<name>NRL4B_TOBAC</name>
<dbReference type="EC" id="3.5.5.1"/>
<dbReference type="EC" id="3.5.5.4"/>
<dbReference type="EMBL" id="D83078">
    <property type="protein sequence ID" value="BAA11770.1"/>
    <property type="molecule type" value="mRNA"/>
</dbReference>
<dbReference type="PIR" id="T03739">
    <property type="entry name" value="T03739"/>
</dbReference>
<dbReference type="RefSeq" id="NP_001313199.1">
    <property type="nucleotide sequence ID" value="NM_001326270.1"/>
</dbReference>
<dbReference type="SMR" id="Q42966"/>
<dbReference type="STRING" id="4097.Q42966"/>
<dbReference type="PaxDb" id="4097-Q42966"/>
<dbReference type="GeneID" id="107832013"/>
<dbReference type="KEGG" id="nta:107832013"/>
<dbReference type="OMA" id="HIAVWPG"/>
<dbReference type="OrthoDB" id="10250282at2759"/>
<dbReference type="Proteomes" id="UP000084051">
    <property type="component" value="Unplaced"/>
</dbReference>
<dbReference type="GO" id="GO:0047427">
    <property type="term" value="F:cyanoalanine nitrilase activity"/>
    <property type="evidence" value="ECO:0007669"/>
    <property type="project" value="UniProtKB-EC"/>
</dbReference>
<dbReference type="GO" id="GO:0000257">
    <property type="term" value="F:nitrilase activity"/>
    <property type="evidence" value="ECO:0000318"/>
    <property type="project" value="GO_Central"/>
</dbReference>
<dbReference type="GO" id="GO:0018822">
    <property type="term" value="F:nitrile hydratase activity"/>
    <property type="evidence" value="ECO:0000318"/>
    <property type="project" value="GO_Central"/>
</dbReference>
<dbReference type="GO" id="GO:0051410">
    <property type="term" value="P:detoxification of nitrogen compound"/>
    <property type="evidence" value="ECO:0000318"/>
    <property type="project" value="GO_Central"/>
</dbReference>
<dbReference type="CDD" id="cd07564">
    <property type="entry name" value="nitrilases_CHs"/>
    <property type="match status" value="1"/>
</dbReference>
<dbReference type="FunFam" id="3.60.110.10:FF:000006">
    <property type="entry name" value="Bifunctional nitrilase/nitrile hydratase NIT4B"/>
    <property type="match status" value="1"/>
</dbReference>
<dbReference type="Gene3D" id="3.60.110.10">
    <property type="entry name" value="Carbon-nitrogen hydrolase"/>
    <property type="match status" value="1"/>
</dbReference>
<dbReference type="InterPro" id="IPR003010">
    <property type="entry name" value="C-N_Hydrolase"/>
</dbReference>
<dbReference type="InterPro" id="IPR036526">
    <property type="entry name" value="C-N_Hydrolase_sf"/>
</dbReference>
<dbReference type="InterPro" id="IPR000132">
    <property type="entry name" value="Nitrilase/CN_hydratase_CS"/>
</dbReference>
<dbReference type="InterPro" id="IPR044149">
    <property type="entry name" value="Nitrilases_CHs"/>
</dbReference>
<dbReference type="PANTHER" id="PTHR46044:SF1">
    <property type="entry name" value="CN HYDROLASE DOMAIN-CONTAINING PROTEIN"/>
    <property type="match status" value="1"/>
</dbReference>
<dbReference type="PANTHER" id="PTHR46044">
    <property type="entry name" value="NITRILASE"/>
    <property type="match status" value="1"/>
</dbReference>
<dbReference type="Pfam" id="PF00795">
    <property type="entry name" value="CN_hydrolase"/>
    <property type="match status" value="1"/>
</dbReference>
<dbReference type="SUPFAM" id="SSF56317">
    <property type="entry name" value="Carbon-nitrogen hydrolase"/>
    <property type="match status" value="1"/>
</dbReference>
<dbReference type="PROSITE" id="PS50263">
    <property type="entry name" value="CN_HYDROLASE"/>
    <property type="match status" value="1"/>
</dbReference>
<dbReference type="PROSITE" id="PS00920">
    <property type="entry name" value="NITRIL_CHT_1"/>
    <property type="match status" value="1"/>
</dbReference>
<dbReference type="PROSITE" id="PS00921">
    <property type="entry name" value="NITRIL_CHT_2"/>
    <property type="match status" value="1"/>
</dbReference>
<protein>
    <recommendedName>
        <fullName>Bifunctional nitrilase/nitrile hydratase NIT4B</fullName>
        <shortName>TNIT4B</shortName>
        <ecNumber>3.5.5.1</ecNumber>
        <ecNumber>3.5.5.4</ecNumber>
    </recommendedName>
    <alternativeName>
        <fullName>Cyanoalanine nitrilase B</fullName>
    </alternativeName>
    <alternativeName>
        <fullName>Nitrilase 4B</fullName>
    </alternativeName>
</protein>
<keyword id="KW-0378">Hydrolase</keyword>
<keyword id="KW-1185">Reference proteome</keyword>
<proteinExistence type="evidence at transcript level"/>
<organism>
    <name type="scientific">Nicotiana tabacum</name>
    <name type="common">Common tobacco</name>
    <dbReference type="NCBI Taxonomy" id="4097"/>
    <lineage>
        <taxon>Eukaryota</taxon>
        <taxon>Viridiplantae</taxon>
        <taxon>Streptophyta</taxon>
        <taxon>Embryophyta</taxon>
        <taxon>Tracheophyta</taxon>
        <taxon>Spermatophyta</taxon>
        <taxon>Magnoliopsida</taxon>
        <taxon>eudicotyledons</taxon>
        <taxon>Gunneridae</taxon>
        <taxon>Pentapetalae</taxon>
        <taxon>asterids</taxon>
        <taxon>lamiids</taxon>
        <taxon>Solanales</taxon>
        <taxon>Solanaceae</taxon>
        <taxon>Nicotianoideae</taxon>
        <taxon>Nicotianeae</taxon>
        <taxon>Nicotiana</taxon>
    </lineage>
</organism>
<gene>
    <name type="primary">NIT4B</name>
</gene>